<comment type="function">
    <text evidence="1">Component of the gamma-tubulin ring complex (gTuRC) which mediates microtubule nucleation (By similarity). The gTuRC regulates the minus-end nucleation of alpha-beta tubulin heterodimers that grow into microtubule protafilaments, a critical step in centrosome duplication and spindle formation (By similarity). Plays a role in neuronal migration (By similarity).</text>
</comment>
<comment type="subunit">
    <text evidence="1">Component of the gamma-tubulin ring complex (gTuRC) consisting of TUBGCP2, TUBGCP3, TUBGCP4, TUBGCP5 and TUBGCP6 and gamma-tubulin TUBG1 or TUBG2 (By similarity). TUBGCP2, TUBGCP3, TUBGCP4, TUBGCP5 and TUBGCP6 assemble in a 5:5:2:1:1 stoichiometry; each is associated with a gamma-tubulin, thereby arranging 14 gamma-tubulins in a helical manner (By similarity). Gamma-tubulin at the first position is blocked by TUBGCP3 at the last position, allowing 13 protafilaments to grow into a microtubule (By similarity). The gTuRC (via TUBGCP3 and TUBGCP6) interacts with ACTB and MZT1; the interactions form a luminal bridge that stabilizes the initial structure during complex assembly (By similarity). The gTuRC (via TUBGCP2) interacts with MZT2A/MZT2B and CDK5RAP2 (via CM1 motif); the interactions play a role in gTuRC activation (By similarity). Interacts with ATF5; the ATF5:PCNT:polyglutamylated tubulin (PGT) tripartite unites the mother centriole and the pericentriolar material (PCM) in the centrosome (By similarity).</text>
</comment>
<comment type="subcellular location">
    <subcellularLocation>
        <location evidence="1">Cytoplasm</location>
        <location evidence="1">Cytoskeleton</location>
        <location evidence="1">Microtubule organizing center</location>
        <location evidence="1">Centrosome</location>
    </subcellularLocation>
</comment>
<comment type="similarity">
    <text evidence="3">Belongs to the TUBGCP family.</text>
</comment>
<name>GCP2_PONAB</name>
<keyword id="KW-0963">Cytoplasm</keyword>
<keyword id="KW-0206">Cytoskeleton</keyword>
<keyword id="KW-0493">Microtubule</keyword>
<keyword id="KW-0597">Phosphoprotein</keyword>
<keyword id="KW-1185">Reference proteome</keyword>
<dbReference type="EMBL" id="CR860862">
    <property type="protein sequence ID" value="CAH92970.1"/>
    <property type="molecule type" value="mRNA"/>
</dbReference>
<dbReference type="RefSeq" id="NP_001126754.1">
    <property type="nucleotide sequence ID" value="NM_001133282.1"/>
</dbReference>
<dbReference type="SMR" id="Q5R5J6"/>
<dbReference type="FunCoup" id="Q5R5J6">
    <property type="interactions" value="2860"/>
</dbReference>
<dbReference type="STRING" id="9601.ENSPPYP00000003257"/>
<dbReference type="GeneID" id="100173756"/>
<dbReference type="KEGG" id="pon:100173756"/>
<dbReference type="CTD" id="10844"/>
<dbReference type="eggNOG" id="KOG2001">
    <property type="taxonomic scope" value="Eukaryota"/>
</dbReference>
<dbReference type="InParanoid" id="Q5R5J6"/>
<dbReference type="OrthoDB" id="2192946at2759"/>
<dbReference type="Proteomes" id="UP000001595">
    <property type="component" value="Unplaced"/>
</dbReference>
<dbReference type="GO" id="GO:0005813">
    <property type="term" value="C:centrosome"/>
    <property type="evidence" value="ECO:0007669"/>
    <property type="project" value="UniProtKB-SubCell"/>
</dbReference>
<dbReference type="GO" id="GO:0005737">
    <property type="term" value="C:cytoplasm"/>
    <property type="evidence" value="ECO:0007669"/>
    <property type="project" value="UniProtKB-KW"/>
</dbReference>
<dbReference type="GO" id="GO:0000930">
    <property type="term" value="C:gamma-tubulin complex"/>
    <property type="evidence" value="ECO:0007669"/>
    <property type="project" value="TreeGrafter"/>
</dbReference>
<dbReference type="GO" id="GO:0005874">
    <property type="term" value="C:microtubule"/>
    <property type="evidence" value="ECO:0007669"/>
    <property type="project" value="UniProtKB-KW"/>
</dbReference>
<dbReference type="GO" id="GO:0005815">
    <property type="term" value="C:microtubule organizing center"/>
    <property type="evidence" value="ECO:0000250"/>
    <property type="project" value="UniProtKB"/>
</dbReference>
<dbReference type="GO" id="GO:0000922">
    <property type="term" value="C:spindle pole"/>
    <property type="evidence" value="ECO:0007669"/>
    <property type="project" value="InterPro"/>
</dbReference>
<dbReference type="GO" id="GO:0043015">
    <property type="term" value="F:gamma-tubulin binding"/>
    <property type="evidence" value="ECO:0007669"/>
    <property type="project" value="InterPro"/>
</dbReference>
<dbReference type="GO" id="GO:0051011">
    <property type="term" value="F:microtubule minus-end binding"/>
    <property type="evidence" value="ECO:0007669"/>
    <property type="project" value="TreeGrafter"/>
</dbReference>
<dbReference type="GO" id="GO:0007420">
    <property type="term" value="P:brain development"/>
    <property type="evidence" value="ECO:0000250"/>
    <property type="project" value="UniProtKB"/>
</dbReference>
<dbReference type="GO" id="GO:0031122">
    <property type="term" value="P:cytoplasmic microtubule organization"/>
    <property type="evidence" value="ECO:0007669"/>
    <property type="project" value="TreeGrafter"/>
</dbReference>
<dbReference type="GO" id="GO:0051321">
    <property type="term" value="P:meiotic cell cycle"/>
    <property type="evidence" value="ECO:0007669"/>
    <property type="project" value="TreeGrafter"/>
</dbReference>
<dbReference type="GO" id="GO:0007020">
    <property type="term" value="P:microtubule nucleation"/>
    <property type="evidence" value="ECO:0007669"/>
    <property type="project" value="InterPro"/>
</dbReference>
<dbReference type="GO" id="GO:0000278">
    <property type="term" value="P:mitotic cell cycle"/>
    <property type="evidence" value="ECO:0007669"/>
    <property type="project" value="TreeGrafter"/>
</dbReference>
<dbReference type="GO" id="GO:0001764">
    <property type="term" value="P:neuron migration"/>
    <property type="evidence" value="ECO:0000250"/>
    <property type="project" value="UniProtKB"/>
</dbReference>
<dbReference type="GO" id="GO:0051225">
    <property type="term" value="P:spindle assembly"/>
    <property type="evidence" value="ECO:0007669"/>
    <property type="project" value="TreeGrafter"/>
</dbReference>
<dbReference type="FunFam" id="1.20.120.1900:FF:000002">
    <property type="entry name" value="Gamma-tubulin complex component"/>
    <property type="match status" value="1"/>
</dbReference>
<dbReference type="Gene3D" id="1.20.120.1900">
    <property type="entry name" value="Gamma-tubulin complex, C-terminal domain"/>
    <property type="match status" value="1"/>
</dbReference>
<dbReference type="InterPro" id="IPR007259">
    <property type="entry name" value="GCP"/>
</dbReference>
<dbReference type="InterPro" id="IPR040457">
    <property type="entry name" value="GCP_C"/>
</dbReference>
<dbReference type="InterPro" id="IPR042241">
    <property type="entry name" value="GCP_C_sf"/>
</dbReference>
<dbReference type="InterPro" id="IPR041470">
    <property type="entry name" value="GCP_N"/>
</dbReference>
<dbReference type="PANTHER" id="PTHR19302">
    <property type="entry name" value="GAMMA TUBULIN COMPLEX PROTEIN"/>
    <property type="match status" value="1"/>
</dbReference>
<dbReference type="PANTHER" id="PTHR19302:SF13">
    <property type="entry name" value="GAMMA-TUBULIN COMPLEX COMPONENT 2"/>
    <property type="match status" value="1"/>
</dbReference>
<dbReference type="Pfam" id="PF04130">
    <property type="entry name" value="GCP_C_terminal"/>
    <property type="match status" value="1"/>
</dbReference>
<dbReference type="Pfam" id="PF17681">
    <property type="entry name" value="GCP_N_terminal"/>
    <property type="match status" value="1"/>
</dbReference>
<protein>
    <recommendedName>
        <fullName>Gamma-tubulin complex component 2</fullName>
        <shortName>GCP-2</shortName>
    </recommendedName>
</protein>
<evidence type="ECO:0000250" key="1">
    <source>
        <dbReference type="UniProtKB" id="Q9BSJ2"/>
    </source>
</evidence>
<evidence type="ECO:0000256" key="2">
    <source>
        <dbReference type="SAM" id="MobiDB-lite"/>
    </source>
</evidence>
<evidence type="ECO:0000305" key="3"/>
<reference key="1">
    <citation type="submission" date="2004-11" db="EMBL/GenBank/DDBJ databases">
        <authorList>
            <consortium name="The German cDNA consortium"/>
        </authorList>
    </citation>
    <scope>NUCLEOTIDE SEQUENCE [LARGE SCALE MRNA]</scope>
    <source>
        <tissue>Kidney</tissue>
    </source>
</reference>
<feature type="chain" id="PRO_0000301686" description="Gamma-tubulin complex component 2">
    <location>
        <begin position="1"/>
        <end position="902"/>
    </location>
</feature>
<feature type="region of interest" description="Disordered" evidence="2">
    <location>
        <begin position="875"/>
        <end position="902"/>
    </location>
</feature>
<feature type="modified residue" description="Phosphotyrosine" evidence="1">
    <location>
        <position position="83"/>
    </location>
</feature>
<organism>
    <name type="scientific">Pongo abelii</name>
    <name type="common">Sumatran orangutan</name>
    <name type="synonym">Pongo pygmaeus abelii</name>
    <dbReference type="NCBI Taxonomy" id="9601"/>
    <lineage>
        <taxon>Eukaryota</taxon>
        <taxon>Metazoa</taxon>
        <taxon>Chordata</taxon>
        <taxon>Craniata</taxon>
        <taxon>Vertebrata</taxon>
        <taxon>Euteleostomi</taxon>
        <taxon>Mammalia</taxon>
        <taxon>Eutheria</taxon>
        <taxon>Euarchontoglires</taxon>
        <taxon>Primates</taxon>
        <taxon>Haplorrhini</taxon>
        <taxon>Catarrhini</taxon>
        <taxon>Hominidae</taxon>
        <taxon>Pongo</taxon>
    </lineage>
</organism>
<proteinExistence type="evidence at transcript level"/>
<sequence length="902" mass="102469">MSEFRIHHDVNELLSLLRVHGGDGAEVYIDLLQKNRTPYVTTTVSAHSAKVKIAEFSRTPEDFLKKYDELKSKNTRNLDPLVYLLSKLTEDKETLQYLQQNAKERAELAAAAVGSSTTSVNVPAAASKISMQELEELRKQLGSVATGSTLQQSLELKRKMLRDKQNKKNSDQHLPIFPAWVYERPALIGDFLIGAGISTDTALPIGTLPLASQESAVVEDLLYVLVGVDGRYVTAQPLAGRQSRTFLVDPNLDLSIRELVNRILPVAASYSTVTRFIEEKSSFEYGQVNHALAAAMRTLVKEHLILVSQLEQLHRQGLLSLQKLWFYIQPAMRTMDILASLATSVDKGECLGGSTLSLLHDRSFSYTGDSQAQELCLYLTKAASAPYFEVLEKWIYRGIIHDPYSEFMVEEHELRKERIQEDYNDKYWDQRYTIVQQQIPSFLQKMADKILSTGKYLNVVRECGHDVTCPVAKEIIYTLKERAYVEQIEKAFNYASKVLLDFLMEEKELVAHLRSIKRYFLMDQGDFFVHFMDLAEEELRKPVEDITPPRLEALLELALRMSTANTDPFKDDLKIDLMPHDLITQLLRVLAIETKQEKAMAHADPTELTLSGLEAFSFDYIVKWPLSLIINRKALTRYQMLFRHMFYCKHVERQLCSVWISNKTAKQHSLPSAQWFAGAFTLRQRMLNFVQNIQYYMMFEVMEPTWHILEKNLKSASNIDDVLGYHTGFLDTCLKDCMLTNPELLKVFSKLMSVCVMFTNCMQKFTQSMKLDGELGGQTLEHGTLPGLPAGAEDRARKELARKHLAEHADAAQLVSGFEATINKFDKNFSAHLLDLLARLSIYSTSDCEHGMASVTSRLDFNGFYTERLERLSAERSQKAAPQVPVLRGPPAPAPRVAVTAQ</sequence>
<gene>
    <name type="primary">TUBGCP2</name>
</gene>
<accession>Q5R5J6</accession>